<feature type="chain" id="PRO_0000332739" description="Tubulin beta 8B">
    <location>
        <begin position="1"/>
        <end position="444"/>
    </location>
</feature>
<feature type="region of interest" description="Disordered" evidence="7">
    <location>
        <begin position="421"/>
        <end position="444"/>
    </location>
</feature>
<feature type="short sequence motif" description="MREI motif" evidence="2">
    <location>
        <begin position="1"/>
        <end position="4"/>
    </location>
</feature>
<feature type="compositionally biased region" description="Acidic residues" evidence="7">
    <location>
        <begin position="429"/>
        <end position="444"/>
    </location>
</feature>
<feature type="binding site" evidence="5">
    <location>
        <position position="11"/>
    </location>
    <ligand>
        <name>GTP</name>
        <dbReference type="ChEBI" id="CHEBI:37565"/>
    </ligand>
</feature>
<feature type="binding site" evidence="3">
    <location>
        <position position="69"/>
    </location>
    <ligand>
        <name>GTP</name>
        <dbReference type="ChEBI" id="CHEBI:37565"/>
    </ligand>
</feature>
<feature type="binding site" evidence="3">
    <location>
        <position position="69"/>
    </location>
    <ligand>
        <name>Mg(2+)</name>
        <dbReference type="ChEBI" id="CHEBI:18420"/>
    </ligand>
</feature>
<feature type="binding site" evidence="5">
    <location>
        <position position="138"/>
    </location>
    <ligand>
        <name>GTP</name>
        <dbReference type="ChEBI" id="CHEBI:37565"/>
    </ligand>
</feature>
<feature type="binding site" evidence="5">
    <location>
        <position position="142"/>
    </location>
    <ligand>
        <name>GTP</name>
        <dbReference type="ChEBI" id="CHEBI:37565"/>
    </ligand>
</feature>
<feature type="binding site" evidence="5">
    <location>
        <position position="143"/>
    </location>
    <ligand>
        <name>GTP</name>
        <dbReference type="ChEBI" id="CHEBI:37565"/>
    </ligand>
</feature>
<feature type="binding site" evidence="5">
    <location>
        <position position="144"/>
    </location>
    <ligand>
        <name>GTP</name>
        <dbReference type="ChEBI" id="CHEBI:37565"/>
    </ligand>
</feature>
<feature type="binding site" evidence="5">
    <location>
        <position position="204"/>
    </location>
    <ligand>
        <name>GTP</name>
        <dbReference type="ChEBI" id="CHEBI:37565"/>
    </ligand>
</feature>
<feature type="binding site" evidence="5">
    <location>
        <position position="226"/>
    </location>
    <ligand>
        <name>GTP</name>
        <dbReference type="ChEBI" id="CHEBI:37565"/>
    </ligand>
</feature>
<feature type="modified residue" description="Phosphoserine; by CDK1" evidence="8">
    <location>
        <position position="172"/>
    </location>
</feature>
<feature type="modified residue" description="5-glutamyl polyglutamate" evidence="6">
    <location>
        <position position="436"/>
    </location>
</feature>
<comment type="function">
    <text>Tubulin is the major constituent of microtubules, a cylinder consisting of laterally associated linear protofilaments composed of alpha- and beta-tubulin heterodimers. Microtubules grow by the addition of GTP-tubulin dimers to the microtubule end, where a stabilizing cap forms. Below the cap, tubulin dimers are in GDP-bound state, owing to GTPase activity of alpha-tubulin.</text>
</comment>
<comment type="cofactor">
    <cofactor evidence="3">
        <name>Mg(2+)</name>
        <dbReference type="ChEBI" id="CHEBI:18420"/>
    </cofactor>
</comment>
<comment type="subunit">
    <text>Dimer of alpha and beta chains. A typical microtubule is a hollow water-filled tube with an outer diameter of 25 nm and an inner diameter of 15 nM. Alpha-beta heterodimers associate head-to-tail to form protofilaments running lengthwise along the microtubule wall with the beta-tubulin subunit facing the microtubule plus end conferring a structural polarity. Microtubules usually have 13 protofilaments but different protofilament numbers can be found in some organisms and specialized cells.</text>
</comment>
<comment type="subcellular location">
    <subcellularLocation>
        <location evidence="1">Cytoplasm</location>
        <location evidence="1">Cytoskeleton</location>
    </subcellularLocation>
</comment>
<comment type="domain">
    <text evidence="2">The MREI motif is common among all beta-tubulin isoforms and may be critical for tubulin autoregulation.</text>
</comment>
<comment type="PTM">
    <text evidence="4 9">Some glutamate residues at the C-terminus are polyglutamylated, resulting in polyglutamate chains on the gamma-carboxyl group (PubMed:26875866). Polyglutamylation plays a key role in microtubule severing by spastin (SPAST). SPAST preferentially recognizes and acts on microtubules decorated with short polyglutamate tails: severing activity by SPAST increases as the number of glutamates per tubulin rises from one to eight, but decreases beyond this glutamylation threshold (PubMed:26875866). Glutamylation is also involved in cilia motility (By similarity).</text>
</comment>
<comment type="PTM">
    <text evidence="2 11">Some glutamate residues at the C-terminus are monoglycylated but not polyglycylated due to the absence of functional TTLL10 in human. Monoglycylation is mainly limited to tubulin incorporated into cilia and flagella axonemes, which is required for their stability and maintenance. Flagella glycylation controls sperm motility. Both polyglutamylation and monoglycylation can coexist on the same protein on adjacent residues, and lowering glycylation levels increases polyglutamylation, and reciprocally.</text>
</comment>
<comment type="PTM">
    <text evidence="8">Phosphorylated on Ser-172 by CDK1 during the cell cycle, from metaphase to telophase, but not in interphase. This phosphorylation inhibits tubulin incorporation into microtubules.</text>
</comment>
<comment type="similarity">
    <text evidence="10">Belongs to the tubulin family.</text>
</comment>
<proteinExistence type="evidence at protein level"/>
<protein>
    <recommendedName>
        <fullName>Tubulin beta 8B</fullName>
    </recommendedName>
</protein>
<name>TBB8B_HUMAN</name>
<accession>A6NNZ2</accession>
<dbReference type="EMBL" id="AP001005">
    <property type="status" value="NOT_ANNOTATED_CDS"/>
    <property type="molecule type" value="Genomic_DNA"/>
</dbReference>
<dbReference type="CCDS" id="CCDS86657.1"/>
<dbReference type="RefSeq" id="NP_001345618.1">
    <property type="nucleotide sequence ID" value="NM_001358689.2"/>
</dbReference>
<dbReference type="SMR" id="A6NNZ2"/>
<dbReference type="FunCoup" id="A6NNZ2">
    <property type="interactions" value="74"/>
</dbReference>
<dbReference type="IntAct" id="A6NNZ2">
    <property type="interactions" value="6"/>
</dbReference>
<dbReference type="STRING" id="9606.ENSP00000496713"/>
<dbReference type="ChEMBL" id="CHEMBL3832942"/>
<dbReference type="GlyGen" id="A6NNZ2">
    <property type="glycosylation" value="2 sites, 1 O-linked glycan (2 sites)"/>
</dbReference>
<dbReference type="iPTMnet" id="A6NNZ2"/>
<dbReference type="MetOSite" id="A6NNZ2"/>
<dbReference type="SwissPalm" id="A6NNZ2"/>
<dbReference type="BioMuta" id="-"/>
<dbReference type="jPOST" id="A6NNZ2"/>
<dbReference type="MassIVE" id="A6NNZ2"/>
<dbReference type="PaxDb" id="9606-ENSP00000309431"/>
<dbReference type="PeptideAtlas" id="A6NNZ2"/>
<dbReference type="Antibodypedia" id="71184">
    <property type="antibodies" value="16 antibodies from 5 providers"/>
</dbReference>
<dbReference type="Ensembl" id="ENST00000308911.9">
    <property type="protein sequence ID" value="ENSP00000496713.1"/>
    <property type="gene ID" value="ENSG00000173213.11"/>
</dbReference>
<dbReference type="GeneID" id="260334"/>
<dbReference type="MANE-Select" id="ENST00000308911.9">
    <property type="protein sequence ID" value="ENSP00000496713.1"/>
    <property type="RefSeq nucleotide sequence ID" value="NM_001358689.2"/>
    <property type="RefSeq protein sequence ID" value="NP_001345618.1"/>
</dbReference>
<dbReference type="UCSC" id="uc060mri.1">
    <property type="organism name" value="human"/>
</dbReference>
<dbReference type="AGR" id="HGNC:24983"/>
<dbReference type="GeneCards" id="TUBB8B"/>
<dbReference type="HGNC" id="HGNC:24983">
    <property type="gene designation" value="TUBB8B"/>
</dbReference>
<dbReference type="HPA" id="ENSG00000173213">
    <property type="expression patterns" value="Tissue enhanced (ovary)"/>
</dbReference>
<dbReference type="neXtProt" id="NX_A6NNZ2"/>
<dbReference type="VEuPathDB" id="HostDB:ENSG00000173213"/>
<dbReference type="eggNOG" id="KOG1375">
    <property type="taxonomic scope" value="Eukaryota"/>
</dbReference>
<dbReference type="GeneTree" id="ENSGT00940000161436"/>
<dbReference type="HOGENOM" id="CLU_015718_1_1_1"/>
<dbReference type="InParanoid" id="A6NNZ2"/>
<dbReference type="OMA" id="GSHRWAH"/>
<dbReference type="OrthoDB" id="1662883at2759"/>
<dbReference type="PAN-GO" id="A6NNZ2">
    <property type="GO annotations" value="6 GO annotations based on evolutionary models"/>
</dbReference>
<dbReference type="PhylomeDB" id="A6NNZ2"/>
<dbReference type="PathwayCommons" id="A6NNZ2"/>
<dbReference type="Reactome" id="R-HSA-1445148">
    <property type="pathway name" value="Translocation of SLC2A4 (GLUT4) to the plasma membrane"/>
</dbReference>
<dbReference type="Reactome" id="R-HSA-190840">
    <property type="pathway name" value="Microtubule-dependent trafficking of connexons from Golgi to the plasma membrane"/>
</dbReference>
<dbReference type="Reactome" id="R-HSA-190861">
    <property type="pathway name" value="Gap junction assembly"/>
</dbReference>
<dbReference type="Reactome" id="R-HSA-2132295">
    <property type="pathway name" value="MHC class II antigen presentation"/>
</dbReference>
<dbReference type="Reactome" id="R-HSA-2467813">
    <property type="pathway name" value="Separation of Sister Chromatids"/>
</dbReference>
<dbReference type="Reactome" id="R-HSA-2500257">
    <property type="pathway name" value="Resolution of Sister Chromatid Cohesion"/>
</dbReference>
<dbReference type="Reactome" id="R-HSA-3371497">
    <property type="pathway name" value="HSP90 chaperone cycle for steroid hormone receptors (SHR) in the presence of ligand"/>
</dbReference>
<dbReference type="Reactome" id="R-HSA-380320">
    <property type="pathway name" value="Recruitment of NuMA to mitotic centrosomes"/>
</dbReference>
<dbReference type="Reactome" id="R-HSA-437239">
    <property type="pathway name" value="Recycling pathway of L1"/>
</dbReference>
<dbReference type="Reactome" id="R-HSA-5617833">
    <property type="pathway name" value="Cilium Assembly"/>
</dbReference>
<dbReference type="Reactome" id="R-HSA-5626467">
    <property type="pathway name" value="RHO GTPases activate IQGAPs"/>
</dbReference>
<dbReference type="Reactome" id="R-HSA-5663220">
    <property type="pathway name" value="RHO GTPases Activate Formins"/>
</dbReference>
<dbReference type="Reactome" id="R-HSA-6807878">
    <property type="pathway name" value="COPI-mediated anterograde transport"/>
</dbReference>
<dbReference type="Reactome" id="R-HSA-6811434">
    <property type="pathway name" value="COPI-dependent Golgi-to-ER retrograde traffic"/>
</dbReference>
<dbReference type="Reactome" id="R-HSA-6811436">
    <property type="pathway name" value="COPI-independent Golgi-to-ER retrograde traffic"/>
</dbReference>
<dbReference type="Reactome" id="R-HSA-68877">
    <property type="pathway name" value="Mitotic Prometaphase"/>
</dbReference>
<dbReference type="Reactome" id="R-HSA-8852276">
    <property type="pathway name" value="The role of GTSE1 in G2/M progression after G2 checkpoint"/>
</dbReference>
<dbReference type="Reactome" id="R-HSA-8955332">
    <property type="pathway name" value="Carboxyterminal post-translational modifications of tubulin"/>
</dbReference>
<dbReference type="Reactome" id="R-HSA-9609690">
    <property type="pathway name" value="HCMV Early Events"/>
</dbReference>
<dbReference type="Reactome" id="R-HSA-9609736">
    <property type="pathway name" value="Assembly and cell surface presentation of NMDA receptors"/>
</dbReference>
<dbReference type="Reactome" id="R-HSA-9619483">
    <property type="pathway name" value="Activation of AMPK downstream of NMDARs"/>
</dbReference>
<dbReference type="Reactome" id="R-HSA-9646399">
    <property type="pathway name" value="Aggrephagy"/>
</dbReference>
<dbReference type="Reactome" id="R-HSA-9648025">
    <property type="pathway name" value="EML4 and NUDC in mitotic spindle formation"/>
</dbReference>
<dbReference type="Reactome" id="R-HSA-9668328">
    <property type="pathway name" value="Sealing of the nuclear envelope (NE) by ESCRT-III"/>
</dbReference>
<dbReference type="Reactome" id="R-HSA-983189">
    <property type="pathway name" value="Kinesins"/>
</dbReference>
<dbReference type="Reactome" id="R-HSA-9833482">
    <property type="pathway name" value="PKR-mediated signaling"/>
</dbReference>
<dbReference type="Pharos" id="A6NNZ2">
    <property type="development level" value="Tdark"/>
</dbReference>
<dbReference type="PRO" id="PR:A6NNZ2"/>
<dbReference type="Proteomes" id="UP000005640">
    <property type="component" value="Chromosome 18"/>
</dbReference>
<dbReference type="RNAct" id="A6NNZ2">
    <property type="molecule type" value="protein"/>
</dbReference>
<dbReference type="Bgee" id="ENSG00000173213">
    <property type="expression patterns" value="Expressed in primordial germ cell in gonad and 76 other cell types or tissues"/>
</dbReference>
<dbReference type="GO" id="GO:0005737">
    <property type="term" value="C:cytoplasm"/>
    <property type="evidence" value="ECO:0000318"/>
    <property type="project" value="GO_Central"/>
</dbReference>
<dbReference type="GO" id="GO:0070062">
    <property type="term" value="C:extracellular exosome"/>
    <property type="evidence" value="ECO:0007005"/>
    <property type="project" value="UniProtKB"/>
</dbReference>
<dbReference type="GO" id="GO:0045171">
    <property type="term" value="C:intercellular bridge"/>
    <property type="evidence" value="ECO:0000314"/>
    <property type="project" value="HPA"/>
</dbReference>
<dbReference type="GO" id="GO:0005874">
    <property type="term" value="C:microtubule"/>
    <property type="evidence" value="ECO:0000318"/>
    <property type="project" value="GO_Central"/>
</dbReference>
<dbReference type="GO" id="GO:0015630">
    <property type="term" value="C:microtubule cytoskeleton"/>
    <property type="evidence" value="ECO:0000314"/>
    <property type="project" value="HPA"/>
</dbReference>
<dbReference type="GO" id="GO:0072686">
    <property type="term" value="C:mitotic spindle"/>
    <property type="evidence" value="ECO:0000314"/>
    <property type="project" value="HPA"/>
</dbReference>
<dbReference type="GO" id="GO:0005525">
    <property type="term" value="F:GTP binding"/>
    <property type="evidence" value="ECO:0000318"/>
    <property type="project" value="GO_Central"/>
</dbReference>
<dbReference type="GO" id="GO:0003924">
    <property type="term" value="F:GTPase activity"/>
    <property type="evidence" value="ECO:0007669"/>
    <property type="project" value="InterPro"/>
</dbReference>
<dbReference type="GO" id="GO:0046872">
    <property type="term" value="F:metal ion binding"/>
    <property type="evidence" value="ECO:0007669"/>
    <property type="project" value="UniProtKB-KW"/>
</dbReference>
<dbReference type="GO" id="GO:0005200">
    <property type="term" value="F:structural constituent of cytoskeleton"/>
    <property type="evidence" value="ECO:0000318"/>
    <property type="project" value="GO_Central"/>
</dbReference>
<dbReference type="GO" id="GO:0000226">
    <property type="term" value="P:microtubule cytoskeleton organization"/>
    <property type="evidence" value="ECO:0000318"/>
    <property type="project" value="GO_Central"/>
</dbReference>
<dbReference type="GO" id="GO:0000278">
    <property type="term" value="P:mitotic cell cycle"/>
    <property type="evidence" value="ECO:0000318"/>
    <property type="project" value="GO_Central"/>
</dbReference>
<dbReference type="CDD" id="cd02187">
    <property type="entry name" value="beta_tubulin"/>
    <property type="match status" value="1"/>
</dbReference>
<dbReference type="FunFam" id="1.10.287.600:FF:000002">
    <property type="entry name" value="Tubulin beta chain"/>
    <property type="match status" value="1"/>
</dbReference>
<dbReference type="FunFam" id="3.30.1330.20:FF:000002">
    <property type="entry name" value="Tubulin beta chain"/>
    <property type="match status" value="1"/>
</dbReference>
<dbReference type="FunFam" id="3.40.50.1440:FF:000003">
    <property type="entry name" value="Tubulin beta chain"/>
    <property type="match status" value="1"/>
</dbReference>
<dbReference type="Gene3D" id="1.10.287.600">
    <property type="entry name" value="Helix hairpin bin"/>
    <property type="match status" value="1"/>
</dbReference>
<dbReference type="Gene3D" id="3.30.1330.20">
    <property type="entry name" value="Tubulin/FtsZ, C-terminal domain"/>
    <property type="match status" value="1"/>
</dbReference>
<dbReference type="Gene3D" id="3.40.50.1440">
    <property type="entry name" value="Tubulin/FtsZ, GTPase domain"/>
    <property type="match status" value="1"/>
</dbReference>
<dbReference type="InterPro" id="IPR013838">
    <property type="entry name" value="Beta-tubulin_BS"/>
</dbReference>
<dbReference type="InterPro" id="IPR002453">
    <property type="entry name" value="Beta_tubulin"/>
</dbReference>
<dbReference type="InterPro" id="IPR008280">
    <property type="entry name" value="Tub_FtsZ_C"/>
</dbReference>
<dbReference type="InterPro" id="IPR000217">
    <property type="entry name" value="Tubulin"/>
</dbReference>
<dbReference type="InterPro" id="IPR037103">
    <property type="entry name" value="Tubulin/FtsZ-like_C"/>
</dbReference>
<dbReference type="InterPro" id="IPR018316">
    <property type="entry name" value="Tubulin/FtsZ_2-layer-sand-dom"/>
</dbReference>
<dbReference type="InterPro" id="IPR036525">
    <property type="entry name" value="Tubulin/FtsZ_GTPase_sf"/>
</dbReference>
<dbReference type="InterPro" id="IPR023123">
    <property type="entry name" value="Tubulin_C"/>
</dbReference>
<dbReference type="InterPro" id="IPR017975">
    <property type="entry name" value="Tubulin_CS"/>
</dbReference>
<dbReference type="InterPro" id="IPR003008">
    <property type="entry name" value="Tubulin_FtsZ_GTPase"/>
</dbReference>
<dbReference type="PANTHER" id="PTHR11588">
    <property type="entry name" value="TUBULIN"/>
    <property type="match status" value="1"/>
</dbReference>
<dbReference type="Pfam" id="PF00091">
    <property type="entry name" value="Tubulin"/>
    <property type="match status" value="1"/>
</dbReference>
<dbReference type="Pfam" id="PF03953">
    <property type="entry name" value="Tubulin_C"/>
    <property type="match status" value="1"/>
</dbReference>
<dbReference type="PRINTS" id="PR01163">
    <property type="entry name" value="BETATUBULIN"/>
</dbReference>
<dbReference type="PRINTS" id="PR01161">
    <property type="entry name" value="TUBULIN"/>
</dbReference>
<dbReference type="SMART" id="SM00864">
    <property type="entry name" value="Tubulin"/>
    <property type="match status" value="1"/>
</dbReference>
<dbReference type="SMART" id="SM00865">
    <property type="entry name" value="Tubulin_C"/>
    <property type="match status" value="1"/>
</dbReference>
<dbReference type="SUPFAM" id="SSF55307">
    <property type="entry name" value="Tubulin C-terminal domain-like"/>
    <property type="match status" value="1"/>
</dbReference>
<dbReference type="SUPFAM" id="SSF52490">
    <property type="entry name" value="Tubulin nucleotide-binding domain-like"/>
    <property type="match status" value="1"/>
</dbReference>
<dbReference type="PROSITE" id="PS00227">
    <property type="entry name" value="TUBULIN"/>
    <property type="match status" value="1"/>
</dbReference>
<dbReference type="PROSITE" id="PS00228">
    <property type="entry name" value="TUBULIN_B_AUTOREG"/>
    <property type="match status" value="1"/>
</dbReference>
<evidence type="ECO:0000250" key="1"/>
<evidence type="ECO:0000250" key="2">
    <source>
        <dbReference type="UniProtKB" id="P07437"/>
    </source>
</evidence>
<evidence type="ECO:0000250" key="3">
    <source>
        <dbReference type="UniProtKB" id="P68363"/>
    </source>
</evidence>
<evidence type="ECO:0000250" key="4">
    <source>
        <dbReference type="UniProtKB" id="P99024"/>
    </source>
</evidence>
<evidence type="ECO:0000250" key="5">
    <source>
        <dbReference type="UniProtKB" id="Q13509"/>
    </source>
</evidence>
<evidence type="ECO:0000250" key="6">
    <source>
        <dbReference type="UniProtKB" id="Q2T9S0"/>
    </source>
</evidence>
<evidence type="ECO:0000256" key="7">
    <source>
        <dbReference type="SAM" id="MobiDB-lite"/>
    </source>
</evidence>
<evidence type="ECO:0000269" key="8">
    <source>
    </source>
</evidence>
<evidence type="ECO:0000269" key="9">
    <source>
    </source>
</evidence>
<evidence type="ECO:0000305" key="10"/>
<evidence type="ECO:0000305" key="11">
    <source>
    </source>
</evidence>
<evidence type="ECO:0000312" key="12">
    <source>
        <dbReference type="HGNC" id="HGNC:24983"/>
    </source>
</evidence>
<keyword id="KW-0963">Cytoplasm</keyword>
<keyword id="KW-0206">Cytoskeleton</keyword>
<keyword id="KW-0342">GTP-binding</keyword>
<keyword id="KW-1017">Isopeptide bond</keyword>
<keyword id="KW-0460">Magnesium</keyword>
<keyword id="KW-0479">Metal-binding</keyword>
<keyword id="KW-0493">Microtubule</keyword>
<keyword id="KW-0547">Nucleotide-binding</keyword>
<keyword id="KW-0597">Phosphoprotein</keyword>
<keyword id="KW-1267">Proteomics identification</keyword>
<keyword id="KW-1185">Reference proteome</keyword>
<organism>
    <name type="scientific">Homo sapiens</name>
    <name type="common">Human</name>
    <dbReference type="NCBI Taxonomy" id="9606"/>
    <lineage>
        <taxon>Eukaryota</taxon>
        <taxon>Metazoa</taxon>
        <taxon>Chordata</taxon>
        <taxon>Craniata</taxon>
        <taxon>Vertebrata</taxon>
        <taxon>Euteleostomi</taxon>
        <taxon>Mammalia</taxon>
        <taxon>Eutheria</taxon>
        <taxon>Euarchontoglires</taxon>
        <taxon>Primates</taxon>
        <taxon>Haplorrhini</taxon>
        <taxon>Catarrhini</taxon>
        <taxon>Hominidae</taxon>
        <taxon>Homo</taxon>
    </lineage>
</organism>
<reference key="1">
    <citation type="journal article" date="2005" name="Nature">
        <title>DNA sequence and analysis of human chromosome 18.</title>
        <authorList>
            <person name="Nusbaum C."/>
            <person name="Zody M.C."/>
            <person name="Borowsky M.L."/>
            <person name="Kamal M."/>
            <person name="Kodira C.D."/>
            <person name="Taylor T.D."/>
            <person name="Whittaker C.A."/>
            <person name="Chang J.L."/>
            <person name="Cuomo C.A."/>
            <person name="Dewar K."/>
            <person name="FitzGerald M.G."/>
            <person name="Yang X."/>
            <person name="Abouelleil A."/>
            <person name="Allen N.R."/>
            <person name="Anderson S."/>
            <person name="Bloom T."/>
            <person name="Bugalter B."/>
            <person name="Butler J."/>
            <person name="Cook A."/>
            <person name="DeCaprio D."/>
            <person name="Engels R."/>
            <person name="Garber M."/>
            <person name="Gnirke A."/>
            <person name="Hafez N."/>
            <person name="Hall J.L."/>
            <person name="Norman C.H."/>
            <person name="Itoh T."/>
            <person name="Jaffe D.B."/>
            <person name="Kuroki Y."/>
            <person name="Lehoczky J."/>
            <person name="Lui A."/>
            <person name="Macdonald P."/>
            <person name="Mauceli E."/>
            <person name="Mikkelsen T.S."/>
            <person name="Naylor J.W."/>
            <person name="Nicol R."/>
            <person name="Nguyen C."/>
            <person name="Noguchi H."/>
            <person name="O'Leary S.B."/>
            <person name="Piqani B."/>
            <person name="Smith C.L."/>
            <person name="Talamas J.A."/>
            <person name="Topham K."/>
            <person name="Totoki Y."/>
            <person name="Toyoda A."/>
            <person name="Wain H.M."/>
            <person name="Young S.K."/>
            <person name="Zeng Q."/>
            <person name="Zimmer A.R."/>
            <person name="Fujiyama A."/>
            <person name="Hattori M."/>
            <person name="Birren B.W."/>
            <person name="Sakaki Y."/>
            <person name="Lander E.S."/>
        </authorList>
    </citation>
    <scope>NUCLEOTIDE SEQUENCE [LARGE SCALE GENOMIC DNA]</scope>
</reference>
<reference key="2">
    <citation type="journal article" date="2006" name="Mol. Biol. Cell">
        <title>Microtubule regulation in mitosis: tubulin phosphorylation by the cyclin-dependent kinase Cdk1.</title>
        <authorList>
            <person name="Fourest-Lieuvin A."/>
            <person name="Peris L."/>
            <person name="Gache V."/>
            <person name="Garcia-Saez I."/>
            <person name="Juillan-Binard C."/>
            <person name="Lantez V."/>
            <person name="Job D."/>
        </authorList>
    </citation>
    <scope>PHOSPHORYLATION AT SER-172</scope>
</reference>
<reference key="3">
    <citation type="journal article" date="2009" name="Cell">
        <title>Evolutionary divergence of enzymatic mechanisms for posttranslational polyglycylation.</title>
        <authorList>
            <person name="Rogowski K."/>
            <person name="Juge F."/>
            <person name="van Dijk J."/>
            <person name="Wloga D."/>
            <person name="Strub J.-M."/>
            <person name="Levilliers N."/>
            <person name="Thomas D."/>
            <person name="Bre M.-H."/>
            <person name="Van Dorsselaer A."/>
            <person name="Gaertig J."/>
            <person name="Janke C."/>
        </authorList>
    </citation>
    <scope>GLYCYLATION</scope>
</reference>
<reference key="4">
    <citation type="journal article" date="2016" name="Cell">
        <title>Graded control of microtubule severing by tubulin glutamylation.</title>
        <authorList>
            <person name="Valenstein M.L."/>
            <person name="Roll-Mecak A."/>
        </authorList>
    </citation>
    <scope>GLUTAMYLATION</scope>
</reference>
<sequence>MREIVLTQTGQCGNQIGAKFWEVISDEHAIDSAGTYHGDSHLQLERINVHHHEASGGRYVPRAVLVDLEPGTMDSVHSGPFGQVFRPDNFISGQCGAGNNWAKGRYTEGAELTESVMDVVRKEAESCDCLQGFQLTHSLGGGTGSGMGTLLISKIREEYPDRIINTFSILPSPKVSDTVVEPYNATLSVHQLIENADETFCIDNEALYDICSRTLKLPTPTYGDLNHLVSATMSGVTTCLRFPGQLNADLRKLAVNMVPFPRLHFFMPGFAPLTSRGSQQYRALTVAELTQQMFDAKNMMAACDPRHGCYLTVAAIFRGRMPMREVDEQMFNIQDKNSSYFADWFPDNVKTAVCDIPPRGLKMSATFIGNNAAIQELFTCVSEQFTAMFRRKAFLHWYTGEGMDEMEFTEAESNMNDLVSEYQQYQDATAEEEEDEEYAEEEVA</sequence>
<gene>
    <name evidence="12" type="primary">TUBB8B</name>
</gene>